<sequence length="62" mass="6156">MEMKNIFVALFISAVLVSSVSAATMESPAPSPGASSASTVAFPVVGSIVAASLSAFLALLLQ</sequence>
<dbReference type="EMBL" id="AB025629">
    <property type="status" value="NOT_ANNOTATED_CDS"/>
    <property type="molecule type" value="Genomic_DNA"/>
</dbReference>
<dbReference type="EMBL" id="CP002686">
    <property type="protein sequence ID" value="AEE76433.1"/>
    <property type="molecule type" value="Genomic_DNA"/>
</dbReference>
<dbReference type="EMBL" id="DQ446680">
    <property type="protein sequence ID" value="ABE65953.1"/>
    <property type="molecule type" value="mRNA"/>
</dbReference>
<dbReference type="EMBL" id="DQ653097">
    <property type="protein sequence ID" value="ABK28566.1"/>
    <property type="status" value="ALT_SEQ"/>
    <property type="molecule type" value="mRNA"/>
</dbReference>
<dbReference type="EMBL" id="BT026389">
    <property type="protein sequence ID" value="ABH04496.1"/>
    <property type="molecule type" value="mRNA"/>
</dbReference>
<dbReference type="EMBL" id="AY086220">
    <property type="protein sequence ID" value="AAM67312.1"/>
    <property type="molecule type" value="mRNA"/>
</dbReference>
<dbReference type="RefSeq" id="NP_566668.1">
    <property type="nucleotide sequence ID" value="NM_112978.1"/>
</dbReference>
<dbReference type="FunCoup" id="Q8LD43">
    <property type="interactions" value="1"/>
</dbReference>
<dbReference type="IntAct" id="Q8LD43">
    <property type="interactions" value="1"/>
</dbReference>
<dbReference type="STRING" id="3702.Q8LD43"/>
<dbReference type="GlyCosmos" id="Q8LD43">
    <property type="glycosylation" value="3 sites, No reported glycans"/>
</dbReference>
<dbReference type="PaxDb" id="3702-AT3G20865.1"/>
<dbReference type="EnsemblPlants" id="AT3G20865.1">
    <property type="protein sequence ID" value="AT3G20865.1"/>
    <property type="gene ID" value="AT3G20865"/>
</dbReference>
<dbReference type="GeneID" id="821635"/>
<dbReference type="Gramene" id="AT3G20865.1">
    <property type="protein sequence ID" value="AT3G20865.1"/>
    <property type="gene ID" value="AT3G20865"/>
</dbReference>
<dbReference type="KEGG" id="ath:AT3G20865"/>
<dbReference type="Araport" id="AT3G20865"/>
<dbReference type="TAIR" id="AT3G20865">
    <property type="gene designation" value="AGP40"/>
</dbReference>
<dbReference type="HOGENOM" id="CLU_2907166_0_0_1"/>
<dbReference type="InParanoid" id="Q8LD43"/>
<dbReference type="OMA" id="QMRNVNN"/>
<dbReference type="PRO" id="PR:Q8LD43"/>
<dbReference type="Proteomes" id="UP000006548">
    <property type="component" value="Chromosome 3"/>
</dbReference>
<dbReference type="ExpressionAtlas" id="Q8LD43">
    <property type="expression patterns" value="baseline and differential"/>
</dbReference>
<dbReference type="GO" id="GO:0005886">
    <property type="term" value="C:plasma membrane"/>
    <property type="evidence" value="ECO:0007669"/>
    <property type="project" value="UniProtKB-SubCell"/>
</dbReference>
<dbReference type="GO" id="GO:0098552">
    <property type="term" value="C:side of membrane"/>
    <property type="evidence" value="ECO:0007669"/>
    <property type="project" value="UniProtKB-KW"/>
</dbReference>
<dbReference type="InterPro" id="IPR044702">
    <property type="entry name" value="AGP23/40"/>
</dbReference>
<dbReference type="PANTHER" id="PTHR34672:SF14">
    <property type="entry name" value="ARABINOGALACTAN PROTEIN 40"/>
    <property type="match status" value="1"/>
</dbReference>
<dbReference type="PANTHER" id="PTHR34672">
    <property type="entry name" value="POLLEN-SPECIFIC ARABINOGALACTA PROTEIN BAN102"/>
    <property type="match status" value="1"/>
</dbReference>
<protein>
    <recommendedName>
        <fullName evidence="4">Arabinogalactan protein 40</fullName>
        <shortName evidence="4">AtAGP40</shortName>
    </recommendedName>
    <alternativeName>
        <fullName evidence="4">Arabinogalactan peptide 40</fullName>
        <shortName evidence="4">AG-peptide 40</shortName>
    </alternativeName>
</protein>
<name>AGP40_ARATH</name>
<gene>
    <name evidence="4" type="primary">AGP40</name>
    <name evidence="7" type="ordered locus">At3g20865</name>
    <name evidence="8" type="ORF">MOE17</name>
</gene>
<reference key="1">
    <citation type="journal article" date="2000" name="DNA Res.">
        <title>Structural analysis of Arabidopsis thaliana chromosome 3. I. Sequence features of the regions of 4,504,864 bp covered by sixty P1 and TAC clones.</title>
        <authorList>
            <person name="Sato S."/>
            <person name="Nakamura Y."/>
            <person name="Kaneko T."/>
            <person name="Katoh T."/>
            <person name="Asamizu E."/>
            <person name="Tabata S."/>
        </authorList>
    </citation>
    <scope>NUCLEOTIDE SEQUENCE [LARGE SCALE GENOMIC DNA]</scope>
    <source>
        <strain>cv. Columbia</strain>
    </source>
</reference>
<reference key="2">
    <citation type="journal article" date="2017" name="Plant J.">
        <title>Araport11: a complete reannotation of the Arabidopsis thaliana reference genome.</title>
        <authorList>
            <person name="Cheng C.Y."/>
            <person name="Krishnakumar V."/>
            <person name="Chan A.P."/>
            <person name="Thibaud-Nissen F."/>
            <person name="Schobel S."/>
            <person name="Town C.D."/>
        </authorList>
    </citation>
    <scope>GENOME REANNOTATION</scope>
    <source>
        <strain>cv. Columbia</strain>
    </source>
</reference>
<reference key="3">
    <citation type="journal article" date="2006" name="Plant Biotechnol. J.">
        <title>Simultaneous high-throughput recombinational cloning of open reading frames in closed and open configurations.</title>
        <authorList>
            <person name="Underwood B.A."/>
            <person name="Vanderhaeghen R."/>
            <person name="Whitford R."/>
            <person name="Town C.D."/>
            <person name="Hilson P."/>
        </authorList>
    </citation>
    <scope>NUCLEOTIDE SEQUENCE [LARGE SCALE MRNA]</scope>
    <source>
        <strain>cv. Columbia</strain>
    </source>
</reference>
<reference key="4">
    <citation type="submission" date="2006-08" db="EMBL/GenBank/DDBJ databases">
        <title>Arabidopsis ORF Clones.</title>
        <authorList>
            <person name="Quinitio C."/>
            <person name="Chen H."/>
            <person name="Kim C.J."/>
            <person name="Shinn P."/>
            <person name="Ecker J.R."/>
        </authorList>
    </citation>
    <scope>NUCLEOTIDE SEQUENCE [LARGE SCALE MRNA]</scope>
    <source>
        <strain>cv. Columbia</strain>
    </source>
</reference>
<reference key="5">
    <citation type="submission" date="2002-03" db="EMBL/GenBank/DDBJ databases">
        <title>Full-length cDNA from Arabidopsis thaliana.</title>
        <authorList>
            <person name="Brover V.V."/>
            <person name="Troukhan M.E."/>
            <person name="Alexandrov N.A."/>
            <person name="Lu Y.-P."/>
            <person name="Flavell R.B."/>
            <person name="Feldmann K.A."/>
        </authorList>
    </citation>
    <scope>NUCLEOTIDE SEQUENCE [LARGE SCALE MRNA]</scope>
</reference>
<reference key="6">
    <citation type="journal article" date="2004" name="J. Biol. Chem.">
        <title>Post-translational modifications of arabinogalactan-peptides of Arabidopsis thaliana. Endoplasmic reticulum and glycosylphosphatidylinositol-anchor signal cleavage sites and hydroxylation of proline.</title>
        <authorList>
            <person name="Schultz C.J."/>
            <person name="Ferguson K.L."/>
            <person name="Lahnstein J."/>
            <person name="Bacic A."/>
        </authorList>
    </citation>
    <scope>PROTEIN SEQUENCE OF 23-35</scope>
    <scope>HYDROXYLATION AT PRO-28; PRO-30 AND PRO-32</scope>
    <scope>GLYCOSYLATION AT PRO-28; PRO-30 AND PRO-32</scope>
    <scope>GPI-ANCHOR AT SER-35</scope>
</reference>
<reference key="7">
    <citation type="journal article" date="2014" name="Mol. Plant">
        <title>Arabidopsis AT-hook protein TEK positively regulates the expression of arabinogalactan proteins in controlling nexine layer formation in the pollen wall.</title>
        <authorList>
            <person name="Jia Q.S."/>
            <person name="Zhu J."/>
            <person name="Xu X.F."/>
            <person name="Lou Y."/>
            <person name="Zhang Z.L."/>
            <person name="Zhang Z.P."/>
            <person name="Yang Z.N."/>
        </authorList>
    </citation>
    <scope>INDUCTION</scope>
</reference>
<organism>
    <name type="scientific">Arabidopsis thaliana</name>
    <name type="common">Mouse-ear cress</name>
    <dbReference type="NCBI Taxonomy" id="3702"/>
    <lineage>
        <taxon>Eukaryota</taxon>
        <taxon>Viridiplantae</taxon>
        <taxon>Streptophyta</taxon>
        <taxon>Embryophyta</taxon>
        <taxon>Tracheophyta</taxon>
        <taxon>Spermatophyta</taxon>
        <taxon>Magnoliopsida</taxon>
        <taxon>eudicotyledons</taxon>
        <taxon>Gunneridae</taxon>
        <taxon>Pentapetalae</taxon>
        <taxon>rosids</taxon>
        <taxon>malvids</taxon>
        <taxon>Brassicales</taxon>
        <taxon>Brassicaceae</taxon>
        <taxon>Camelineae</taxon>
        <taxon>Arabidopsis</taxon>
    </lineage>
</organism>
<keyword id="KW-1003">Cell membrane</keyword>
<keyword id="KW-0903">Direct protein sequencing</keyword>
<keyword id="KW-0325">Glycoprotein</keyword>
<keyword id="KW-0336">GPI-anchor</keyword>
<keyword id="KW-0379">Hydroxylation</keyword>
<keyword id="KW-0449">Lipoprotein</keyword>
<keyword id="KW-0472">Membrane</keyword>
<keyword id="KW-0654">Proteoglycan</keyword>
<keyword id="KW-1185">Reference proteome</keyword>
<keyword id="KW-0732">Signal</keyword>
<accession>Q8LD43</accession>
<accession>A0MEX4</accession>
<proteinExistence type="evidence at protein level"/>
<evidence type="ECO:0000255" key="1"/>
<evidence type="ECO:0000269" key="2">
    <source>
    </source>
</evidence>
<evidence type="ECO:0000269" key="3">
    <source>
    </source>
</evidence>
<evidence type="ECO:0000303" key="4">
    <source>
    </source>
</evidence>
<evidence type="ECO:0000305" key="5"/>
<evidence type="ECO:0000305" key="6">
    <source>
    </source>
</evidence>
<evidence type="ECO:0000312" key="7">
    <source>
        <dbReference type="Araport" id="AT3G20865"/>
    </source>
</evidence>
<evidence type="ECO:0000312" key="8">
    <source>
        <dbReference type="EMBL" id="AB025629"/>
    </source>
</evidence>
<comment type="function">
    <text evidence="5">Proteoglycan that seems to be implicated in diverse developmental roles such as differentiation, cell-cell recognition, embryogenesis and programmed cell death.</text>
</comment>
<comment type="subcellular location">
    <subcellularLocation>
        <location evidence="1">Cell membrane</location>
        <topology evidence="2">Lipid-anchor</topology>
        <topology evidence="2">GPI-anchor</topology>
    </subcellularLocation>
</comment>
<comment type="induction">
    <text evidence="3">Up-regulated by AHL16/TEK.</text>
</comment>
<comment type="PTM">
    <text evidence="2">Contains 4-hydroxyproline; hydroxylated on Pro-28, Pro-30 and Pro-32.</text>
</comment>
<comment type="PTM">
    <text evidence="6">O-glycosylated on hydroxyprolines; noncontiguous hydroxylproline residues are glycosylated with arabinogalactan.</text>
</comment>
<comment type="similarity">
    <text evidence="5">Belongs to the AG-peptide AGP family.</text>
</comment>
<comment type="sequence caution" evidence="5">
    <conflict type="erroneous termination">
        <sequence resource="EMBL-CDS" id="ABK28566"/>
    </conflict>
    <text>Extended C-terminus.</text>
</comment>
<feature type="signal peptide" evidence="2">
    <location>
        <begin position="1"/>
        <end position="22"/>
    </location>
</feature>
<feature type="peptide" id="PRO_0000432047" description="Arabinogalactan protein 40" evidence="2">
    <location>
        <begin position="23"/>
        <end position="35"/>
    </location>
</feature>
<feature type="propeptide" id="PRO_0000432048" description="Removed in mature form" evidence="6">
    <location>
        <begin position="36"/>
        <end position="62"/>
    </location>
</feature>
<feature type="modified residue" description="4-hydroxyproline" evidence="2">
    <location>
        <position position="28"/>
    </location>
</feature>
<feature type="modified residue" description="4-hydroxyproline" evidence="2">
    <location>
        <position position="30"/>
    </location>
</feature>
<feature type="modified residue" description="4-hydroxyproline" evidence="2">
    <location>
        <position position="32"/>
    </location>
</feature>
<feature type="lipid moiety-binding region" description="GPI-anchor amidated serine" evidence="2">
    <location>
        <position position="35"/>
    </location>
</feature>
<feature type="glycosylation site" description="O-linked (Ara...) hydroxyproline" evidence="6">
    <location>
        <position position="28"/>
    </location>
</feature>
<feature type="glycosylation site" description="O-linked (Ara...) hydroxyproline" evidence="6">
    <location>
        <position position="30"/>
    </location>
</feature>
<feature type="glycosylation site" description="O-linked (Ara...) hydroxyproline" evidence="6">
    <location>
        <position position="32"/>
    </location>
</feature>